<accession>P77601</accession>
<accession>Q2MCC1</accession>
<keyword id="KW-0238">DNA-binding</keyword>
<keyword id="KW-1185">Reference proteome</keyword>
<keyword id="KW-0804">Transcription</keyword>
<keyword id="KW-0805">Transcription regulation</keyword>
<name>YKGA_ECOLI</name>
<evidence type="ECO:0000255" key="1">
    <source>
        <dbReference type="PROSITE-ProRule" id="PRU00593"/>
    </source>
</evidence>
<evidence type="ECO:0000305" key="2"/>
<organism>
    <name type="scientific">Escherichia coli (strain K12)</name>
    <dbReference type="NCBI Taxonomy" id="83333"/>
    <lineage>
        <taxon>Bacteria</taxon>
        <taxon>Pseudomonadati</taxon>
        <taxon>Pseudomonadota</taxon>
        <taxon>Gammaproteobacteria</taxon>
        <taxon>Enterobacterales</taxon>
        <taxon>Enterobacteriaceae</taxon>
        <taxon>Escherichia</taxon>
    </lineage>
</organism>
<reference key="1">
    <citation type="submission" date="1997-01" db="EMBL/GenBank/DDBJ databases">
        <title>Sequence of minutes 4-25 of Escherichia coli.</title>
        <authorList>
            <person name="Chung E."/>
            <person name="Allen E."/>
            <person name="Araujo R."/>
            <person name="Aparicio A.M."/>
            <person name="Davis K."/>
            <person name="Duncan M."/>
            <person name="Federspiel N."/>
            <person name="Hyman R."/>
            <person name="Kalman S."/>
            <person name="Komp C."/>
            <person name="Kurdi O."/>
            <person name="Lew H."/>
            <person name="Lin D."/>
            <person name="Namath A."/>
            <person name="Oefner P."/>
            <person name="Roberts D."/>
            <person name="Schramm S."/>
            <person name="Davis R.W."/>
        </authorList>
    </citation>
    <scope>NUCLEOTIDE SEQUENCE [LARGE SCALE GENOMIC DNA]</scope>
    <source>
        <strain>K12 / MG1655 / ATCC 47076</strain>
    </source>
</reference>
<reference key="2">
    <citation type="journal article" date="1997" name="Science">
        <title>The complete genome sequence of Escherichia coli K-12.</title>
        <authorList>
            <person name="Blattner F.R."/>
            <person name="Plunkett G. III"/>
            <person name="Bloch C.A."/>
            <person name="Perna N.T."/>
            <person name="Burland V."/>
            <person name="Riley M."/>
            <person name="Collado-Vides J."/>
            <person name="Glasner J.D."/>
            <person name="Rode C.K."/>
            <person name="Mayhew G.F."/>
            <person name="Gregor J."/>
            <person name="Davis N.W."/>
            <person name="Kirkpatrick H.A."/>
            <person name="Goeden M.A."/>
            <person name="Rose D.J."/>
            <person name="Mau B."/>
            <person name="Shao Y."/>
        </authorList>
    </citation>
    <scope>NUCLEOTIDE SEQUENCE [LARGE SCALE GENOMIC DNA]</scope>
    <source>
        <strain>K12 / MG1655 / ATCC 47076</strain>
    </source>
</reference>
<reference key="3">
    <citation type="journal article" date="2006" name="Mol. Syst. Biol.">
        <title>Highly accurate genome sequences of Escherichia coli K-12 strains MG1655 and W3110.</title>
        <authorList>
            <person name="Hayashi K."/>
            <person name="Morooka N."/>
            <person name="Yamamoto Y."/>
            <person name="Fujita K."/>
            <person name="Isono K."/>
            <person name="Choi S."/>
            <person name="Ohtsubo E."/>
            <person name="Baba T."/>
            <person name="Wanner B.L."/>
            <person name="Mori H."/>
            <person name="Horiuchi T."/>
        </authorList>
    </citation>
    <scope>NUCLEOTIDE SEQUENCE [LARGE SCALE GENOMIC DNA]</scope>
    <source>
        <strain>K12 / W3110 / ATCC 27325 / DSM 5911</strain>
    </source>
</reference>
<comment type="caution">
    <text evidence="2">Could be the product of a pseudogene.</text>
</comment>
<comment type="sequence caution" evidence="2">
    <conflict type="erroneous initiation">
        <sequence resource="EMBL-CDS" id="BAE76085"/>
    </conflict>
</comment>
<dbReference type="EMBL" id="U73857">
    <property type="protein sequence ID" value="AAB18028.1"/>
    <property type="molecule type" value="Genomic_DNA"/>
</dbReference>
<dbReference type="EMBL" id="U00096">
    <property type="status" value="NOT_ANNOTATED_CDS"/>
    <property type="molecule type" value="Genomic_DNA"/>
</dbReference>
<dbReference type="EMBL" id="AP009048">
    <property type="protein sequence ID" value="BAE76085.1"/>
    <property type="status" value="ALT_INIT"/>
    <property type="molecule type" value="Genomic_DNA"/>
</dbReference>
<dbReference type="PIR" id="D64756">
    <property type="entry name" value="D64756"/>
</dbReference>
<dbReference type="SMR" id="P77601"/>
<dbReference type="BioGRID" id="4259797">
    <property type="interactions" value="27"/>
</dbReference>
<dbReference type="FunCoup" id="P77601">
    <property type="interactions" value="3"/>
</dbReference>
<dbReference type="KEGG" id="ecj:JW5037"/>
<dbReference type="EchoBASE" id="EB3162"/>
<dbReference type="eggNOG" id="COG2207">
    <property type="taxonomic scope" value="Bacteria"/>
</dbReference>
<dbReference type="eggNOG" id="COG3708">
    <property type="taxonomic scope" value="Bacteria"/>
</dbReference>
<dbReference type="HOGENOM" id="CLU_000445_81_1_6"/>
<dbReference type="InParanoid" id="P77601"/>
<dbReference type="PhylomeDB" id="P77601"/>
<dbReference type="Proteomes" id="UP000000625">
    <property type="component" value="Chromosome"/>
</dbReference>
<dbReference type="GO" id="GO:0005829">
    <property type="term" value="C:cytosol"/>
    <property type="evidence" value="ECO:0000318"/>
    <property type="project" value="GO_Central"/>
</dbReference>
<dbReference type="GO" id="GO:0001108">
    <property type="term" value="F:bacterial-type RNA polymerase holo enzyme binding"/>
    <property type="evidence" value="ECO:0000318"/>
    <property type="project" value="GO_Central"/>
</dbReference>
<dbReference type="GO" id="GO:0003700">
    <property type="term" value="F:DNA-binding transcription factor activity"/>
    <property type="evidence" value="ECO:0007669"/>
    <property type="project" value="InterPro"/>
</dbReference>
<dbReference type="GO" id="GO:0043565">
    <property type="term" value="F:sequence-specific DNA binding"/>
    <property type="evidence" value="ECO:0000318"/>
    <property type="project" value="GO_Central"/>
</dbReference>
<dbReference type="GO" id="GO:0006355">
    <property type="term" value="P:regulation of DNA-templated transcription"/>
    <property type="evidence" value="ECO:0000318"/>
    <property type="project" value="GO_Central"/>
</dbReference>
<dbReference type="Gene3D" id="1.10.10.60">
    <property type="entry name" value="Homeodomain-like"/>
    <property type="match status" value="2"/>
</dbReference>
<dbReference type="InterPro" id="IPR009057">
    <property type="entry name" value="Homeodomain-like_sf"/>
</dbReference>
<dbReference type="InterPro" id="IPR018060">
    <property type="entry name" value="HTH_AraC"/>
</dbReference>
<dbReference type="InterPro" id="IPR050959">
    <property type="entry name" value="MarA-like"/>
</dbReference>
<dbReference type="InterPro" id="IPR011256">
    <property type="entry name" value="Reg_factor_effector_dom_sf"/>
</dbReference>
<dbReference type="InterPro" id="IPR020449">
    <property type="entry name" value="Tscrpt_reg_AraC-type_HTH"/>
</dbReference>
<dbReference type="PANTHER" id="PTHR47504:SF3">
    <property type="entry name" value="HTH-TYPE TRANSCRIPTIONAL REGULATOR YKGA-RELATED"/>
    <property type="match status" value="1"/>
</dbReference>
<dbReference type="PANTHER" id="PTHR47504">
    <property type="entry name" value="RIGHT ORIGIN-BINDING PROTEIN"/>
    <property type="match status" value="1"/>
</dbReference>
<dbReference type="Pfam" id="PF12833">
    <property type="entry name" value="HTH_18"/>
    <property type="match status" value="1"/>
</dbReference>
<dbReference type="PRINTS" id="PR00032">
    <property type="entry name" value="HTHARAC"/>
</dbReference>
<dbReference type="SMART" id="SM00342">
    <property type="entry name" value="HTH_ARAC"/>
    <property type="match status" value="1"/>
</dbReference>
<dbReference type="SUPFAM" id="SSF46689">
    <property type="entry name" value="Homeodomain-like"/>
    <property type="match status" value="2"/>
</dbReference>
<dbReference type="SUPFAM" id="SSF55136">
    <property type="entry name" value="Probable bacterial effector-binding domain"/>
    <property type="match status" value="1"/>
</dbReference>
<dbReference type="PROSITE" id="PS01124">
    <property type="entry name" value="HTH_ARAC_FAMILY_2"/>
    <property type="match status" value="1"/>
</dbReference>
<protein>
    <recommendedName>
        <fullName>Putative HTH-type transcriptional regulator YkgA</fullName>
    </recommendedName>
</protein>
<sequence>MRYDKELTENEMIRQKILQQLLEWIECNLEHPISIEDIAQKSGYSRRNIQLLFRNFMHVPLGEYIRKRRLCRAAILVRLTAKSMLDIALSLHFDSQQSFSREFKKLFGCSPREYRHRDYWDLANIFPSFLIRQQQKTECRLINFPETPIFGNSFKYDIEVSNKSPDEEVKLRRHHLARCMKNFKTDIYFVSTFEPSTKSVDLLTVETFAGTVCEYADMPKEWTTTRGLYDPTHVIWTQA</sequence>
<feature type="chain" id="PRO_0000194612" description="Putative HTH-type transcriptional regulator YkgA">
    <location>
        <begin position="1"/>
        <end position="239"/>
    </location>
</feature>
<feature type="domain" description="HTH araC/xylS-type" evidence="1">
    <location>
        <begin position="19"/>
        <end position="117"/>
    </location>
</feature>
<feature type="DNA-binding region" description="H-T-H motif" evidence="1">
    <location>
        <begin position="36"/>
        <end position="57"/>
    </location>
</feature>
<feature type="DNA-binding region" description="H-T-H motif" evidence="1">
    <location>
        <begin position="84"/>
        <end position="107"/>
    </location>
</feature>
<proteinExistence type="uncertain"/>
<gene>
    <name type="primary">ykgA</name>
    <name type="ordered locus">b0300</name>
    <name type="ordered locus">JW5037</name>
</gene>